<evidence type="ECO:0000250" key="1"/>
<evidence type="ECO:0000255" key="2"/>
<evidence type="ECO:0000305" key="3"/>
<keyword id="KW-0998">Cell outer membrane</keyword>
<keyword id="KW-0406">Ion transport</keyword>
<keyword id="KW-0472">Membrane</keyword>
<keyword id="KW-0626">Porin</keyword>
<keyword id="KW-1185">Reference proteome</keyword>
<keyword id="KW-0732">Signal</keyword>
<keyword id="KW-0812">Transmembrane</keyword>
<keyword id="KW-1134">Transmembrane beta strand</keyword>
<keyword id="KW-0813">Transport</keyword>
<name>OMPD_SALTY</name>
<organism>
    <name type="scientific">Salmonella typhimurium (strain LT2 / SGSC1412 / ATCC 700720)</name>
    <dbReference type="NCBI Taxonomy" id="99287"/>
    <lineage>
        <taxon>Bacteria</taxon>
        <taxon>Pseudomonadati</taxon>
        <taxon>Pseudomonadota</taxon>
        <taxon>Gammaproteobacteria</taxon>
        <taxon>Enterobacterales</taxon>
        <taxon>Enterobacteriaceae</taxon>
        <taxon>Salmonella</taxon>
    </lineage>
</organism>
<dbReference type="EMBL" id="AE006468">
    <property type="protein sequence ID" value="AAL20490.1"/>
    <property type="molecule type" value="Genomic_DNA"/>
</dbReference>
<dbReference type="EMBL" id="D26057">
    <property type="protein sequence ID" value="BAA05056.1"/>
    <property type="molecule type" value="Genomic_DNA"/>
</dbReference>
<dbReference type="RefSeq" id="NP_460531.1">
    <property type="nucleotide sequence ID" value="NC_003197.2"/>
</dbReference>
<dbReference type="RefSeq" id="WP_000769035.1">
    <property type="nucleotide sequence ID" value="NC_003197.2"/>
</dbReference>
<dbReference type="SMR" id="P37592"/>
<dbReference type="IntAct" id="P37592">
    <property type="interactions" value="1"/>
</dbReference>
<dbReference type="STRING" id="99287.STM1572"/>
<dbReference type="PaxDb" id="99287-STM1572"/>
<dbReference type="GeneID" id="1253090"/>
<dbReference type="KEGG" id="stm:STM1572"/>
<dbReference type="PATRIC" id="fig|99287.12.peg.1663"/>
<dbReference type="HOGENOM" id="CLU_058202_0_0_6"/>
<dbReference type="OMA" id="GENAEVW"/>
<dbReference type="PhylomeDB" id="P37592"/>
<dbReference type="BioCyc" id="SENT99287:STM1572-MONOMER"/>
<dbReference type="Proteomes" id="UP000001014">
    <property type="component" value="Chromosome"/>
</dbReference>
<dbReference type="GO" id="GO:0009279">
    <property type="term" value="C:cell outer membrane"/>
    <property type="evidence" value="ECO:0007669"/>
    <property type="project" value="UniProtKB-SubCell"/>
</dbReference>
<dbReference type="GO" id="GO:0046930">
    <property type="term" value="C:pore complex"/>
    <property type="evidence" value="ECO:0000318"/>
    <property type="project" value="GO_Central"/>
</dbReference>
<dbReference type="GO" id="GO:0015288">
    <property type="term" value="F:porin activity"/>
    <property type="evidence" value="ECO:0000318"/>
    <property type="project" value="GO_Central"/>
</dbReference>
<dbReference type="GO" id="GO:0034220">
    <property type="term" value="P:monoatomic ion transmembrane transport"/>
    <property type="evidence" value="ECO:0007669"/>
    <property type="project" value="InterPro"/>
</dbReference>
<dbReference type="CDD" id="cd00342">
    <property type="entry name" value="gram_neg_porins"/>
    <property type="match status" value="1"/>
</dbReference>
<dbReference type="Gene3D" id="2.40.160.10">
    <property type="entry name" value="Porin"/>
    <property type="match status" value="1"/>
</dbReference>
<dbReference type="InterPro" id="IPR050298">
    <property type="entry name" value="Gram-neg_bact_OMP"/>
</dbReference>
<dbReference type="InterPro" id="IPR033900">
    <property type="entry name" value="Gram_neg_porin_domain"/>
</dbReference>
<dbReference type="InterPro" id="IPR023614">
    <property type="entry name" value="Porin_dom_sf"/>
</dbReference>
<dbReference type="InterPro" id="IPR001897">
    <property type="entry name" value="Porin_gammaproteobac"/>
</dbReference>
<dbReference type="InterPro" id="IPR001702">
    <property type="entry name" value="Porin_Gram-ve"/>
</dbReference>
<dbReference type="InterPro" id="IPR013793">
    <property type="entry name" value="Porin_Gram-ve_CS"/>
</dbReference>
<dbReference type="NCBIfam" id="NF007841">
    <property type="entry name" value="PRK10554.1"/>
    <property type="match status" value="1"/>
</dbReference>
<dbReference type="PANTHER" id="PTHR34501:SF2">
    <property type="entry name" value="OUTER MEMBRANE PORIN F-RELATED"/>
    <property type="match status" value="1"/>
</dbReference>
<dbReference type="PANTHER" id="PTHR34501">
    <property type="entry name" value="PROTEIN YDDL-RELATED"/>
    <property type="match status" value="1"/>
</dbReference>
<dbReference type="Pfam" id="PF00267">
    <property type="entry name" value="Porin_1"/>
    <property type="match status" value="1"/>
</dbReference>
<dbReference type="PRINTS" id="PR00183">
    <property type="entry name" value="ECOLIPORIN"/>
</dbReference>
<dbReference type="PRINTS" id="PR00182">
    <property type="entry name" value="ECOLNEIPORIN"/>
</dbReference>
<dbReference type="SUPFAM" id="SSF56935">
    <property type="entry name" value="Porins"/>
    <property type="match status" value="1"/>
</dbReference>
<dbReference type="PROSITE" id="PS00576">
    <property type="entry name" value="GRAM_NEG_PORIN"/>
    <property type="match status" value="1"/>
</dbReference>
<protein>
    <recommendedName>
        <fullName>Outer membrane porin protein OmpD</fullName>
    </recommendedName>
</protein>
<comment type="function">
    <text evidence="1">Forms pores that allow passive diffusion of small molecules across the outer membrane.</text>
</comment>
<comment type="subunit">
    <text evidence="1">Homotrimer.</text>
</comment>
<comment type="interaction">
    <interactant intactId="EBI-2506775">
        <id>P37592</id>
    </interactant>
    <interactant intactId="EBI-2506763">
        <id>Q8ZPI6</id>
        <label>ydeI</label>
    </interactant>
    <organismsDiffer>false</organismsDiffer>
    <experiments>2</experiments>
</comment>
<comment type="subcellular location">
    <subcellularLocation>
        <location>Cell outer membrane</location>
        <topology>Multi-pass membrane protein</topology>
    </subcellularLocation>
</comment>
<comment type="similarity">
    <text evidence="3">Belongs to the Gram-negative porin family.</text>
</comment>
<reference key="1">
    <citation type="journal article" date="2001" name="Nature">
        <title>Complete genome sequence of Salmonella enterica serovar Typhimurium LT2.</title>
        <authorList>
            <person name="McClelland M."/>
            <person name="Sanderson K.E."/>
            <person name="Spieth J."/>
            <person name="Clifton S.W."/>
            <person name="Latreille P."/>
            <person name="Courtney L."/>
            <person name="Porwollik S."/>
            <person name="Ali J."/>
            <person name="Dante M."/>
            <person name="Du F."/>
            <person name="Hou S."/>
            <person name="Layman D."/>
            <person name="Leonard S."/>
            <person name="Nguyen C."/>
            <person name="Scott K."/>
            <person name="Holmes A."/>
            <person name="Grewal N."/>
            <person name="Mulvaney E."/>
            <person name="Ryan E."/>
            <person name="Sun H."/>
            <person name="Florea L."/>
            <person name="Miller W."/>
            <person name="Stoneking T."/>
            <person name="Nhan M."/>
            <person name="Waterston R."/>
            <person name="Wilson R.K."/>
        </authorList>
    </citation>
    <scope>NUCLEOTIDE SEQUENCE [LARGE SCALE GENOMIC DNA]</scope>
    <source>
        <strain>LT2 / SGSC1412 / ATCC 700720</strain>
    </source>
</reference>
<reference key="2">
    <citation type="journal article" date="1994" name="Gene">
        <title>The methyl viologen-resistance-encoding gene smvA of Salmonella typhimurium.</title>
        <authorList>
            <person name="Hongo E."/>
            <person name="Morimyo M."/>
            <person name="Mita K."/>
            <person name="Machida I."/>
            <person name="Hama-Inaba H."/>
            <person name="Tsuji H."/>
            <person name="Ichimura S."/>
            <person name="Noda Y."/>
        </authorList>
    </citation>
    <scope>NUCLEOTIDE SEQUENCE [GENOMIC DNA] OF 80-362</scope>
    <source>
        <strain>SL1303</strain>
    </source>
</reference>
<reference key="3">
    <citation type="unpublished observations" date="1996-02">
        <authorList>
            <person name="Singh S.P."/>
            <person name="Miller S."/>
            <person name="Williams Y.U."/>
            <person name="Rudd K.E."/>
            <person name="Nikaido H."/>
        </authorList>
    </citation>
    <scope>IDENTIFICATION AS OMPD</scope>
</reference>
<feature type="signal peptide" evidence="2">
    <location>
        <begin position="1"/>
        <end position="21"/>
    </location>
</feature>
<feature type="chain" id="PRO_0000025249" description="Outer membrane porin protein OmpD">
    <location>
        <begin position="22"/>
        <end position="362"/>
    </location>
</feature>
<feature type="sequence conflict" description="In Ref. 2; BAA05056." evidence="3" ref="2">
    <original>N</original>
    <variation>K</variation>
    <location>
        <position position="157"/>
    </location>
</feature>
<feature type="sequence conflict" description="In Ref. 2; BAA05056." evidence="3" ref="2">
    <location>
        <position position="258"/>
    </location>
</feature>
<sequence length="362" mass="39680">MKLKLVAVAVTSLLAAGVVNAAEVYNKDGNKLDLYGKVHAQHYFSDDNGSDGDKTYARLGFKGETQINDQLTGFGQWEYEFKGNRTESQGADKDKTRLAFAGLKFADYGSFDYGRNYGVAYDIGAWTDVLPEFGGDTWTQTDVFMTGRTTGVATYRNTDFFGLVEGLNFAAQYQGKNDRDGAYESNGDGFGLSATYEYEGFGVGAAYAKSDRTNNQVKAASNLNAAGKNAEVWAAGLKYDANNIYLATTYSETLNMTTFGEDAAGDAFIANKTQNFEAVAQYQFDFGLRPSIAYLKSKGKNLGTYGDQDLVEYIDVGATYYFNKNMSTFVDYKINLLDDSDFTKAAKVSTDNIVAVGLNYQF</sequence>
<gene>
    <name type="primary">ompD</name>
    <name type="synonym">nmpC</name>
    <name type="ordered locus">STM1572</name>
</gene>
<proteinExistence type="evidence at protein level"/>
<accession>P37592</accession>